<evidence type="ECO:0000255" key="1">
    <source>
        <dbReference type="HAMAP-Rule" id="MF_00074"/>
    </source>
</evidence>
<feature type="chain" id="PRO_1000202495" description="Ribosomal RNA small subunit methyltransferase G">
    <location>
        <begin position="1"/>
        <end position="212"/>
    </location>
</feature>
<feature type="binding site" evidence="1">
    <location>
        <position position="75"/>
    </location>
    <ligand>
        <name>S-adenosyl-L-methionine</name>
        <dbReference type="ChEBI" id="CHEBI:59789"/>
    </ligand>
</feature>
<feature type="binding site" evidence="1">
    <location>
        <position position="80"/>
    </location>
    <ligand>
        <name>S-adenosyl-L-methionine</name>
        <dbReference type="ChEBI" id="CHEBI:59789"/>
    </ligand>
</feature>
<feature type="binding site" evidence="1">
    <location>
        <begin position="126"/>
        <end position="127"/>
    </location>
    <ligand>
        <name>S-adenosyl-L-methionine</name>
        <dbReference type="ChEBI" id="CHEBI:59789"/>
    </ligand>
</feature>
<feature type="binding site" evidence="1">
    <location>
        <position position="141"/>
    </location>
    <ligand>
        <name>S-adenosyl-L-methionine</name>
        <dbReference type="ChEBI" id="CHEBI:59789"/>
    </ligand>
</feature>
<accession>C5C6N4</accession>
<protein>
    <recommendedName>
        <fullName evidence="1">Ribosomal RNA small subunit methyltransferase G</fullName>
        <ecNumber evidence="1">2.1.1.-</ecNumber>
    </recommendedName>
    <alternativeName>
        <fullName evidence="1">16S rRNA 7-methylguanosine methyltransferase</fullName>
        <shortName evidence="1">16S rRNA m7G methyltransferase</shortName>
    </alternativeName>
</protein>
<proteinExistence type="inferred from homology"/>
<reference key="1">
    <citation type="journal article" date="2009" name="Stand. Genomic Sci.">
        <title>Complete genome sequence of Beutenbergia cavernae type strain (HKI 0122).</title>
        <authorList>
            <person name="Land M."/>
            <person name="Pukall R."/>
            <person name="Abt B."/>
            <person name="Goker M."/>
            <person name="Rohde M."/>
            <person name="Glavina Del Rio T."/>
            <person name="Tice H."/>
            <person name="Copeland A."/>
            <person name="Cheng J.F."/>
            <person name="Lucas S."/>
            <person name="Chen F."/>
            <person name="Nolan M."/>
            <person name="Bruce D."/>
            <person name="Goodwin L."/>
            <person name="Pitluck S."/>
            <person name="Ivanova N."/>
            <person name="Mavromatis K."/>
            <person name="Ovchinnikova G."/>
            <person name="Pati A."/>
            <person name="Chen A."/>
            <person name="Palaniappan K."/>
            <person name="Hauser L."/>
            <person name="Chang Y.J."/>
            <person name="Jefferies C.C."/>
            <person name="Saunders E."/>
            <person name="Brettin T."/>
            <person name="Detter J.C."/>
            <person name="Han C."/>
            <person name="Chain P."/>
            <person name="Bristow J."/>
            <person name="Eisen J.A."/>
            <person name="Markowitz V."/>
            <person name="Hugenholtz P."/>
            <person name="Kyrpides N.C."/>
            <person name="Klenk H.P."/>
            <person name="Lapidus A."/>
        </authorList>
    </citation>
    <scope>NUCLEOTIDE SEQUENCE [LARGE SCALE GENOMIC DNA]</scope>
    <source>
        <strain>ATCC BAA-8 / DSM 12333 / CCUG 43141 / JCM 11478 / NBRC 16432 / NCIMB 13614 / HKI 0122</strain>
    </source>
</reference>
<comment type="function">
    <text evidence="1">Specifically methylates the N7 position of guanine in position 518 of 16S rRNA.</text>
</comment>
<comment type="subcellular location">
    <subcellularLocation>
        <location evidence="1">Cytoplasm</location>
    </subcellularLocation>
</comment>
<comment type="similarity">
    <text evidence="1">Belongs to the methyltransferase superfamily. RNA methyltransferase RsmG family.</text>
</comment>
<sequence length="212" mass="22967">MTGAESLVVEVEASRRILGDGFAGAVRFGELLAEHGEERGLIGPREVPRLWLRHIVNSAAVARWLPDAGSVADVGTGAGLPGVVLALMRPDLDVHLVEPMERRVAWLSELRDELDLDNVTLHQVQAQELHGKLKVQAVTARAVAPLGKLARWTLPLLSRRGVLLAQKGARAQAELDEAAVDLRDFAVDTASVHDVDLLGDGETTRVVEVRLR</sequence>
<keyword id="KW-0963">Cytoplasm</keyword>
<keyword id="KW-0489">Methyltransferase</keyword>
<keyword id="KW-1185">Reference proteome</keyword>
<keyword id="KW-0698">rRNA processing</keyword>
<keyword id="KW-0949">S-adenosyl-L-methionine</keyword>
<keyword id="KW-0808">Transferase</keyword>
<dbReference type="EC" id="2.1.1.-" evidence="1"/>
<dbReference type="EMBL" id="CP001618">
    <property type="protein sequence ID" value="ACQ82458.1"/>
    <property type="molecule type" value="Genomic_DNA"/>
</dbReference>
<dbReference type="RefSeq" id="WP_015884695.1">
    <property type="nucleotide sequence ID" value="NC_012669.1"/>
</dbReference>
<dbReference type="SMR" id="C5C6N4"/>
<dbReference type="STRING" id="471853.Bcav_4220"/>
<dbReference type="KEGG" id="bcv:Bcav_4220"/>
<dbReference type="eggNOG" id="COG0357">
    <property type="taxonomic scope" value="Bacteria"/>
</dbReference>
<dbReference type="HOGENOM" id="CLU_065341_5_0_11"/>
<dbReference type="OrthoDB" id="9808773at2"/>
<dbReference type="Proteomes" id="UP000007962">
    <property type="component" value="Chromosome"/>
</dbReference>
<dbReference type="GO" id="GO:0005829">
    <property type="term" value="C:cytosol"/>
    <property type="evidence" value="ECO:0007669"/>
    <property type="project" value="TreeGrafter"/>
</dbReference>
<dbReference type="GO" id="GO:0070043">
    <property type="term" value="F:rRNA (guanine-N7-)-methyltransferase activity"/>
    <property type="evidence" value="ECO:0007669"/>
    <property type="project" value="UniProtKB-UniRule"/>
</dbReference>
<dbReference type="Gene3D" id="3.40.50.150">
    <property type="entry name" value="Vaccinia Virus protein VP39"/>
    <property type="match status" value="1"/>
</dbReference>
<dbReference type="HAMAP" id="MF_00074">
    <property type="entry name" value="16SrRNA_methyltr_G"/>
    <property type="match status" value="1"/>
</dbReference>
<dbReference type="InterPro" id="IPR003682">
    <property type="entry name" value="rRNA_ssu_MeTfrase_G"/>
</dbReference>
<dbReference type="InterPro" id="IPR029063">
    <property type="entry name" value="SAM-dependent_MTases_sf"/>
</dbReference>
<dbReference type="NCBIfam" id="TIGR00138">
    <property type="entry name" value="rsmG_gidB"/>
    <property type="match status" value="1"/>
</dbReference>
<dbReference type="PANTHER" id="PTHR31760">
    <property type="entry name" value="S-ADENOSYL-L-METHIONINE-DEPENDENT METHYLTRANSFERASES SUPERFAMILY PROTEIN"/>
    <property type="match status" value="1"/>
</dbReference>
<dbReference type="PANTHER" id="PTHR31760:SF0">
    <property type="entry name" value="S-ADENOSYL-L-METHIONINE-DEPENDENT METHYLTRANSFERASES SUPERFAMILY PROTEIN"/>
    <property type="match status" value="1"/>
</dbReference>
<dbReference type="Pfam" id="PF02527">
    <property type="entry name" value="GidB"/>
    <property type="match status" value="1"/>
</dbReference>
<dbReference type="SUPFAM" id="SSF53335">
    <property type="entry name" value="S-adenosyl-L-methionine-dependent methyltransferases"/>
    <property type="match status" value="1"/>
</dbReference>
<gene>
    <name evidence="1" type="primary">rsmG</name>
    <name type="ordered locus">Bcav_4220</name>
</gene>
<name>RSMG_BEUC1</name>
<organism>
    <name type="scientific">Beutenbergia cavernae (strain ATCC BAA-8 / DSM 12333 / CCUG 43141 / JCM 11478 / NBRC 16432 / NCIMB 13614 / HKI 0122)</name>
    <dbReference type="NCBI Taxonomy" id="471853"/>
    <lineage>
        <taxon>Bacteria</taxon>
        <taxon>Bacillati</taxon>
        <taxon>Actinomycetota</taxon>
        <taxon>Actinomycetes</taxon>
        <taxon>Micrococcales</taxon>
        <taxon>Beutenbergiaceae</taxon>
        <taxon>Beutenbergia</taxon>
    </lineage>
</organism>